<feature type="chain" id="PRO_0000142568" description="Nus factor SuhB">
    <location>
        <begin position="1"/>
        <end position="267"/>
    </location>
</feature>
<feature type="binding site" evidence="2">
    <location>
        <position position="67"/>
    </location>
    <ligand>
        <name>Mg(2+)</name>
        <dbReference type="ChEBI" id="CHEBI:18420"/>
    </ligand>
</feature>
<feature type="binding site" evidence="1">
    <location>
        <position position="67"/>
    </location>
    <ligand>
        <name>substrate</name>
    </ligand>
</feature>
<feature type="binding site" evidence="2">
    <location>
        <position position="84"/>
    </location>
    <ligand>
        <name>Mg(2+)</name>
        <dbReference type="ChEBI" id="CHEBI:18420"/>
    </ligand>
</feature>
<feature type="binding site" evidence="1">
    <location>
        <begin position="86"/>
        <end position="89"/>
    </location>
    <ligand>
        <name>substrate</name>
    </ligand>
</feature>
<feature type="binding site" evidence="2">
    <location>
        <position position="86"/>
    </location>
    <ligand>
        <name>Mg(2+)</name>
        <dbReference type="ChEBI" id="CHEBI:18420"/>
    </ligand>
</feature>
<feature type="binding site" evidence="1">
    <location>
        <position position="183"/>
    </location>
    <ligand>
        <name>substrate</name>
    </ligand>
</feature>
<feature type="binding site" evidence="1">
    <location>
        <position position="212"/>
    </location>
    <ligand>
        <name>substrate</name>
    </ligand>
</feature>
<evidence type="ECO:0000250" key="1"/>
<evidence type="ECO:0000250" key="2">
    <source>
        <dbReference type="UniProtKB" id="P0ADG4"/>
    </source>
</evidence>
<evidence type="ECO:0000305" key="3"/>
<keyword id="KW-0143">Chaperone</keyword>
<keyword id="KW-0963">Cytoplasm</keyword>
<keyword id="KW-0378">Hydrolase</keyword>
<keyword id="KW-0460">Magnesium</keyword>
<keyword id="KW-0479">Metal-binding</keyword>
<keyword id="KW-1185">Reference proteome</keyword>
<keyword id="KW-0690">Ribosome biogenesis</keyword>
<keyword id="KW-0694">RNA-binding</keyword>
<keyword id="KW-0804">Transcription</keyword>
<keyword id="KW-0889">Transcription antitermination</keyword>
<keyword id="KW-0805">Transcription regulation</keyword>
<name>SUHB_PASMU</name>
<organism>
    <name type="scientific">Pasteurella multocida (strain Pm70)</name>
    <dbReference type="NCBI Taxonomy" id="272843"/>
    <lineage>
        <taxon>Bacteria</taxon>
        <taxon>Pseudomonadati</taxon>
        <taxon>Pseudomonadota</taxon>
        <taxon>Gammaproteobacteria</taxon>
        <taxon>Pasteurellales</taxon>
        <taxon>Pasteurellaceae</taxon>
        <taxon>Pasteurella</taxon>
    </lineage>
</organism>
<protein>
    <recommendedName>
        <fullName evidence="2">Nus factor SuhB</fullName>
    </recommendedName>
    <alternativeName>
        <fullName>Inositol-1-monophosphatase</fullName>
        <shortName>I-1-Pase</shortName>
        <shortName>IMPase</shortName>
        <shortName>Inositol-1-phosphatase</shortName>
        <ecNumber evidence="2">3.1.3.25</ecNumber>
    </alternativeName>
</protein>
<dbReference type="EC" id="3.1.3.25" evidence="2"/>
<dbReference type="EMBL" id="AE004439">
    <property type="protein sequence ID" value="AAK02399.1"/>
    <property type="molecule type" value="Genomic_DNA"/>
</dbReference>
<dbReference type="RefSeq" id="WP_005725868.1">
    <property type="nucleotide sequence ID" value="NC_002663.1"/>
</dbReference>
<dbReference type="SMR" id="Q9CNV8"/>
<dbReference type="STRING" id="272843.PM0315"/>
<dbReference type="EnsemblBacteria" id="AAK02399">
    <property type="protein sequence ID" value="AAK02399"/>
    <property type="gene ID" value="PM0315"/>
</dbReference>
<dbReference type="KEGG" id="pmu:PM0315"/>
<dbReference type="PATRIC" id="fig|272843.6.peg.328"/>
<dbReference type="HOGENOM" id="CLU_044118_0_4_6"/>
<dbReference type="OrthoDB" id="9785695at2"/>
<dbReference type="Proteomes" id="UP000000809">
    <property type="component" value="Chromosome"/>
</dbReference>
<dbReference type="GO" id="GO:0005737">
    <property type="term" value="C:cytoplasm"/>
    <property type="evidence" value="ECO:0007669"/>
    <property type="project" value="UniProtKB-SubCell"/>
</dbReference>
<dbReference type="GO" id="GO:0008934">
    <property type="term" value="F:inositol monophosphate 1-phosphatase activity"/>
    <property type="evidence" value="ECO:0007669"/>
    <property type="project" value="InterPro"/>
</dbReference>
<dbReference type="GO" id="GO:0046872">
    <property type="term" value="F:metal ion binding"/>
    <property type="evidence" value="ECO:0007669"/>
    <property type="project" value="UniProtKB-KW"/>
</dbReference>
<dbReference type="GO" id="GO:0003723">
    <property type="term" value="F:RNA binding"/>
    <property type="evidence" value="ECO:0007669"/>
    <property type="project" value="UniProtKB-KW"/>
</dbReference>
<dbReference type="GO" id="GO:0006020">
    <property type="term" value="P:inositol metabolic process"/>
    <property type="evidence" value="ECO:0007669"/>
    <property type="project" value="TreeGrafter"/>
</dbReference>
<dbReference type="GO" id="GO:0046854">
    <property type="term" value="P:phosphatidylinositol phosphate biosynthetic process"/>
    <property type="evidence" value="ECO:0007669"/>
    <property type="project" value="InterPro"/>
</dbReference>
<dbReference type="GO" id="GO:0042254">
    <property type="term" value="P:ribosome biogenesis"/>
    <property type="evidence" value="ECO:0007669"/>
    <property type="project" value="UniProtKB-KW"/>
</dbReference>
<dbReference type="GO" id="GO:0007165">
    <property type="term" value="P:signal transduction"/>
    <property type="evidence" value="ECO:0007669"/>
    <property type="project" value="TreeGrafter"/>
</dbReference>
<dbReference type="GO" id="GO:0031564">
    <property type="term" value="P:transcription antitermination"/>
    <property type="evidence" value="ECO:0007669"/>
    <property type="project" value="UniProtKB-KW"/>
</dbReference>
<dbReference type="CDD" id="cd01639">
    <property type="entry name" value="IMPase"/>
    <property type="match status" value="1"/>
</dbReference>
<dbReference type="FunFam" id="3.30.540.10:FF:000003">
    <property type="entry name" value="Inositol-1-monophosphatase"/>
    <property type="match status" value="1"/>
</dbReference>
<dbReference type="FunFam" id="3.40.190.80:FF:000002">
    <property type="entry name" value="Inositol-1-monophosphatase"/>
    <property type="match status" value="1"/>
</dbReference>
<dbReference type="Gene3D" id="3.40.190.80">
    <property type="match status" value="1"/>
</dbReference>
<dbReference type="Gene3D" id="3.30.540.10">
    <property type="entry name" value="Fructose-1,6-Bisphosphatase, subunit A, domain 1"/>
    <property type="match status" value="1"/>
</dbReference>
<dbReference type="InterPro" id="IPR033942">
    <property type="entry name" value="IMPase"/>
</dbReference>
<dbReference type="InterPro" id="IPR020583">
    <property type="entry name" value="Inositol_monoP_metal-BS"/>
</dbReference>
<dbReference type="InterPro" id="IPR000760">
    <property type="entry name" value="Inositol_monophosphatase-like"/>
</dbReference>
<dbReference type="InterPro" id="IPR020550">
    <property type="entry name" value="Inositol_monophosphatase_CS"/>
</dbReference>
<dbReference type="InterPro" id="IPR022337">
    <property type="entry name" value="Inositol_monophosphatase_SuhB"/>
</dbReference>
<dbReference type="NCBIfam" id="NF008027">
    <property type="entry name" value="PRK10757.1"/>
    <property type="match status" value="1"/>
</dbReference>
<dbReference type="PANTHER" id="PTHR20854">
    <property type="entry name" value="INOSITOL MONOPHOSPHATASE"/>
    <property type="match status" value="1"/>
</dbReference>
<dbReference type="PANTHER" id="PTHR20854:SF4">
    <property type="entry name" value="INOSITOL-1-MONOPHOSPHATASE-RELATED"/>
    <property type="match status" value="1"/>
</dbReference>
<dbReference type="Pfam" id="PF00459">
    <property type="entry name" value="Inositol_P"/>
    <property type="match status" value="1"/>
</dbReference>
<dbReference type="PRINTS" id="PR00377">
    <property type="entry name" value="IMPHPHTASES"/>
</dbReference>
<dbReference type="PRINTS" id="PR01959">
    <property type="entry name" value="SBIMPHPHTASE"/>
</dbReference>
<dbReference type="SUPFAM" id="SSF56655">
    <property type="entry name" value="Carbohydrate phosphatase"/>
    <property type="match status" value="1"/>
</dbReference>
<dbReference type="PROSITE" id="PS00629">
    <property type="entry name" value="IMP_1"/>
    <property type="match status" value="1"/>
</dbReference>
<dbReference type="PROSITE" id="PS00630">
    <property type="entry name" value="IMP_2"/>
    <property type="match status" value="1"/>
</dbReference>
<sequence length="267" mass="29470">MNPMLNIAIRAARKAGNVIAKGYERRDDLQTTLKSTNDYVTNIDKASEEAIIEVIRKSYPDHTIITEESGALEGKDSDIQWVIDPLDGTTNFVKGLPHFSVSIAIRVKGRTEVGVVYDPIRNELFTAVRGEGAKINDMRLRVENKRDLAGTVLTTGFPFKQTRLMPMQFAMMNNLIQDCADFRRMGSAALDLCYVAAGRVDGYFEVGVKAWDIAAGDLIVREAGGLVCDFNGGHSYLTSGHLVAAAPRIVKEILNKIQPCLSDEFKK</sequence>
<gene>
    <name type="primary">suhB</name>
    <name type="ordered locus">PM0315</name>
</gene>
<comment type="function">
    <text evidence="2">Part of the processive rRNA transcription and antitermination complex (rrnTAC). The complex forms an RNA-chaperone ring around the RNA exit tunnel of RNA polymerase (RNAP). It supports rapid transcription and antitermination of rRNA operons, cotranscriptional rRNA folding, and annealing of distal rRNA regions to allow correct ribosome biogenesis. This subunit may play a central role in organizing the structure.</text>
</comment>
<comment type="catalytic activity">
    <reaction evidence="2">
        <text>a myo-inositol phosphate + H2O = myo-inositol + phosphate</text>
        <dbReference type="Rhea" id="RHEA:24056"/>
        <dbReference type="ChEBI" id="CHEBI:15377"/>
        <dbReference type="ChEBI" id="CHEBI:17268"/>
        <dbReference type="ChEBI" id="CHEBI:43474"/>
        <dbReference type="ChEBI" id="CHEBI:84139"/>
        <dbReference type="EC" id="3.1.3.25"/>
    </reaction>
</comment>
<comment type="cofactor">
    <cofactor evidence="2">
        <name>Mg(2+)</name>
        <dbReference type="ChEBI" id="CHEBI:18420"/>
    </cofactor>
</comment>
<comment type="subunit">
    <text evidence="2">Homodimer. The rRNA transcription and antitermination complex (rrnTAC) consists of RNA polymerase (RNAP), NusA, NusB, NusE (rpsJ), NusG, SubB, ribosomal protein S4, DNA and precursor rRNA; S4 is more flexible than other subunits.</text>
</comment>
<comment type="subcellular location">
    <subcellularLocation>
        <location evidence="2">Cytoplasm</location>
    </subcellularLocation>
</comment>
<comment type="similarity">
    <text evidence="3">Belongs to the inositol monophosphatase superfamily.</text>
</comment>
<reference key="1">
    <citation type="journal article" date="2001" name="Proc. Natl. Acad. Sci. U.S.A.">
        <title>Complete genomic sequence of Pasteurella multocida Pm70.</title>
        <authorList>
            <person name="May B.J."/>
            <person name="Zhang Q."/>
            <person name="Li L.L."/>
            <person name="Paustian M.L."/>
            <person name="Whittam T.S."/>
            <person name="Kapur V."/>
        </authorList>
    </citation>
    <scope>NUCLEOTIDE SEQUENCE [LARGE SCALE GENOMIC DNA]</scope>
    <source>
        <strain>Pm70</strain>
    </source>
</reference>
<accession>Q9CNV8</accession>
<proteinExistence type="inferred from homology"/>